<dbReference type="EMBL" id="X59862">
    <property type="protein sequence ID" value="CAA42522.1"/>
    <property type="molecule type" value="mRNA"/>
</dbReference>
<dbReference type="PIR" id="S17156">
    <property type="entry name" value="S17156"/>
</dbReference>
<dbReference type="RefSeq" id="XP_022299862.1">
    <property type="nucleotide sequence ID" value="XM_022444154.1"/>
</dbReference>
<dbReference type="SMR" id="P23038"/>
<dbReference type="iPTMnet" id="P23038"/>
<dbReference type="EnsemblMetazoa" id="XM_022444154.1">
    <property type="protein sequence ID" value="XP_022299862.1"/>
    <property type="gene ID" value="LOC111108345"/>
</dbReference>
<dbReference type="GeneID" id="111108345"/>
<dbReference type="Proteomes" id="UP000694844">
    <property type="component" value="Chromosome 8"/>
</dbReference>
<dbReference type="GO" id="GO:0046872">
    <property type="term" value="F:metal ion binding"/>
    <property type="evidence" value="ECO:0007669"/>
    <property type="project" value="UniProtKB-KW"/>
</dbReference>
<dbReference type="InterPro" id="IPR001008">
    <property type="entry name" value="Metalthion_mollusc"/>
</dbReference>
<dbReference type="PRINTS" id="PR00875">
    <property type="entry name" value="MTMOLLUSC"/>
</dbReference>
<feature type="initiator methionine" description="Removed" evidence="2 3">
    <location>
        <position position="1"/>
    </location>
</feature>
<feature type="chain" id="PRO_0000197322" description="Metallothionein">
    <location>
        <begin position="2"/>
        <end position="75"/>
    </location>
</feature>
<feature type="binding site" evidence="1">
    <location>
        <position position="15"/>
    </location>
    <ligand>
        <name>Cd(2+)</name>
        <dbReference type="ChEBI" id="CHEBI:48775"/>
        <label>1</label>
    </ligand>
</feature>
<feature type="binding site" evidence="1">
    <location>
        <position position="19"/>
    </location>
    <ligand>
        <name>Cd(2+)</name>
        <dbReference type="ChEBI" id="CHEBI:48775"/>
        <label>1</label>
    </ligand>
</feature>
<feature type="binding site" evidence="1">
    <location>
        <position position="19"/>
    </location>
    <ligand>
        <name>Cd(2+)</name>
        <dbReference type="ChEBI" id="CHEBI:48775"/>
        <label>2</label>
    </ligand>
</feature>
<feature type="binding site" evidence="1">
    <location>
        <position position="24"/>
    </location>
    <ligand>
        <name>Cd(2+)</name>
        <dbReference type="ChEBI" id="CHEBI:48775"/>
        <label>2</label>
    </ligand>
</feature>
<feature type="binding site" evidence="1">
    <location>
        <position position="26"/>
    </location>
    <ligand>
        <name>Cd(2+)</name>
        <dbReference type="ChEBI" id="CHEBI:48775"/>
        <label>3</label>
    </ligand>
</feature>
<feature type="binding site" evidence="1">
    <location>
        <position position="30"/>
    </location>
    <ligand>
        <name>Cd(2+)</name>
        <dbReference type="ChEBI" id="CHEBI:48775"/>
        <label>3</label>
    </ligand>
</feature>
<feature type="binding site" evidence="1">
    <location>
        <position position="32"/>
    </location>
    <ligand>
        <name>Cd(2+)</name>
        <dbReference type="ChEBI" id="CHEBI:48775"/>
        <label>1</label>
    </ligand>
</feature>
<feature type="binding site" evidence="1">
    <location>
        <position position="32"/>
    </location>
    <ligand>
        <name>Cd(2+)</name>
        <dbReference type="ChEBI" id="CHEBI:48775"/>
        <label>3</label>
    </ligand>
</feature>
<feature type="binding site" evidence="1">
    <location>
        <position position="36"/>
    </location>
    <ligand>
        <name>Cd(2+)</name>
        <dbReference type="ChEBI" id="CHEBI:48775"/>
        <label>1</label>
    </ligand>
</feature>
<feature type="binding site" evidence="1">
    <location>
        <position position="38"/>
    </location>
    <ligand>
        <name>Cd(2+)</name>
        <dbReference type="ChEBI" id="CHEBI:48775"/>
        <label>2</label>
    </ligand>
</feature>
<feature type="binding site" evidence="1">
    <location>
        <position position="41"/>
    </location>
    <ligand>
        <name>Cd(2+)</name>
        <dbReference type="ChEBI" id="CHEBI:48775"/>
        <label>2</label>
    </ligand>
</feature>
<feature type="binding site" evidence="1">
    <location>
        <position position="41"/>
    </location>
    <ligand>
        <name>Cd(2+)</name>
        <dbReference type="ChEBI" id="CHEBI:48775"/>
        <label>3</label>
    </ligand>
</feature>
<feature type="binding site" evidence="1">
    <location>
        <position position="45"/>
    </location>
    <ligand>
        <name>Cd(2+)</name>
        <dbReference type="ChEBI" id="CHEBI:48775"/>
        <label>4</label>
    </ligand>
</feature>
<feature type="binding site" evidence="1">
    <location>
        <position position="47"/>
    </location>
    <ligand>
        <name>Cd(2+)</name>
        <dbReference type="ChEBI" id="CHEBI:48775"/>
        <label>5</label>
    </ligand>
</feature>
<feature type="binding site" evidence="1">
    <location>
        <position position="53"/>
    </location>
    <ligand>
        <name>Cd(2+)</name>
        <dbReference type="ChEBI" id="CHEBI:48775"/>
        <label>5</label>
    </ligand>
</feature>
<feature type="binding site" evidence="1">
    <location>
        <position position="55"/>
    </location>
    <ligand>
        <name>Cd(2+)</name>
        <dbReference type="ChEBI" id="CHEBI:48775"/>
        <label>5</label>
    </ligand>
</feature>
<feature type="binding site" evidence="1">
    <location>
        <position position="55"/>
    </location>
    <ligand>
        <name>Cd(2+)</name>
        <dbReference type="ChEBI" id="CHEBI:48775"/>
        <label>6</label>
    </ligand>
</feature>
<feature type="binding site" evidence="1">
    <location>
        <position position="59"/>
    </location>
    <ligand>
        <name>Cd(2+)</name>
        <dbReference type="ChEBI" id="CHEBI:48775"/>
        <label>4</label>
    </ligand>
</feature>
<feature type="binding site" evidence="1">
    <location>
        <position position="59"/>
    </location>
    <ligand>
        <name>Cd(2+)</name>
        <dbReference type="ChEBI" id="CHEBI:48775"/>
        <label>5</label>
    </ligand>
</feature>
<feature type="binding site" evidence="1">
    <location>
        <position position="65"/>
    </location>
    <ligand>
        <name>Cd(2+)</name>
        <dbReference type="ChEBI" id="CHEBI:48775"/>
        <label>4</label>
    </ligand>
</feature>
<feature type="binding site" evidence="1">
    <location>
        <position position="67"/>
    </location>
    <ligand>
        <name>Cd(2+)</name>
        <dbReference type="ChEBI" id="CHEBI:48775"/>
        <label>6</label>
    </ligand>
</feature>
<feature type="binding site" evidence="1">
    <location>
        <position position="71"/>
    </location>
    <ligand>
        <name>Cd(2+)</name>
        <dbReference type="ChEBI" id="CHEBI:48775"/>
        <label>6</label>
    </ligand>
</feature>
<feature type="binding site" evidence="1">
    <location>
        <position position="73"/>
    </location>
    <ligand>
        <name>Cd(2+)</name>
        <dbReference type="ChEBI" id="CHEBI:48775"/>
        <label>4</label>
    </ligand>
</feature>
<feature type="binding site" evidence="1">
    <location>
        <position position="73"/>
    </location>
    <ligand>
        <name>Cd(2+)</name>
        <dbReference type="ChEBI" id="CHEBI:48775"/>
        <label>6</label>
    </ligand>
</feature>
<feature type="modified residue" description="N-acetylserine" evidence="2">
    <location>
        <position position="2"/>
    </location>
</feature>
<name>MT_CRAVI</name>
<accession>P23038</accession>
<protein>
    <recommendedName>
        <fullName>Metallothionein</fullName>
        <shortName>MT</shortName>
    </recommendedName>
</protein>
<organism>
    <name type="scientific">Crassostrea virginica</name>
    <name type="common">Eastern oyster</name>
    <dbReference type="NCBI Taxonomy" id="6565"/>
    <lineage>
        <taxon>Eukaryota</taxon>
        <taxon>Metazoa</taxon>
        <taxon>Spiralia</taxon>
        <taxon>Lophotrochozoa</taxon>
        <taxon>Mollusca</taxon>
        <taxon>Bivalvia</taxon>
        <taxon>Autobranchia</taxon>
        <taxon>Pteriomorphia</taxon>
        <taxon>Ostreida</taxon>
        <taxon>Ostreoidea</taxon>
        <taxon>Ostreidae</taxon>
        <taxon>Crassostrea</taxon>
    </lineage>
</organism>
<comment type="function">
    <text>The metallothioneins are involved in the cellular sequestration of toxic metal ions.</text>
</comment>
<comment type="induction">
    <text>By cadmium.</text>
</comment>
<comment type="similarity">
    <text evidence="4">Belongs to the metallothionein superfamily. Type 2 family.</text>
</comment>
<evidence type="ECO:0000250" key="1">
    <source>
        <dbReference type="UniProtKB" id="P33187"/>
    </source>
</evidence>
<evidence type="ECO:0000269" key="2">
    <source>
    </source>
</evidence>
<evidence type="ECO:0000269" key="3">
    <source>
    </source>
</evidence>
<evidence type="ECO:0000305" key="4"/>
<proteinExistence type="evidence at protein level"/>
<keyword id="KW-0007">Acetylation</keyword>
<keyword id="KW-0104">Cadmium</keyword>
<keyword id="KW-0903">Direct protein sequencing</keyword>
<keyword id="KW-0479">Metal-binding</keyword>
<keyword id="KW-0480">Metal-thiolate cluster</keyword>
<keyword id="KW-1185">Reference proteome</keyword>
<sequence length="75" mass="7345">MSDPCNCIETGTCACSDSCPATGCKCGPGCKCGDDCKCAGCKVKCSCTSEGGCKCGEKCTGPATCKCGSGCSCKK</sequence>
<reference key="1">
    <citation type="journal article" date="1991" name="Biochim. Biophys. Acta">
        <title>Primary structure of molluscan metallothioneins deduced from PCR-amplified cDNA and mass spectrometry of purified proteins.</title>
        <authorList>
            <person name="Unger M.E."/>
            <person name="Chen T.T."/>
            <person name="Murphy C.M."/>
            <person name="Vestling M.M."/>
            <person name="Fenselau C."/>
            <person name="Roesijadi G."/>
        </authorList>
    </citation>
    <scope>NUCLEOTIDE SEQUENCE [MRNA]</scope>
</reference>
<reference key="2">
    <citation type="journal article" date="1989" name="Arch. Biochem. Biophys.">
        <title>Purification and properties of novel molluscan metallothioneins.</title>
        <authorList>
            <person name="Roesijadi G."/>
            <person name="Kielland S."/>
            <person name="Klerks P."/>
        </authorList>
    </citation>
    <scope>PROTEIN SEQUENCE OF 2-28</scope>
    <source>
        <tissue>Gill</tissue>
    </source>
</reference>
<reference key="3">
    <citation type="journal article" date="1991" name="Biochim. Biophys. Acta">
        <title>Structure and time-dependent behavior of acetylated and non-acetylated forms of a molluscan metallothionein.</title>
        <authorList>
            <person name="Roesijadi G."/>
            <person name="Vestling M.M."/>
            <person name="Murphy C.M."/>
            <person name="Klerks P.L."/>
            <person name="Fenselau C.C."/>
        </authorList>
    </citation>
    <scope>PROTEIN SEQUENCE OF 2-25</scope>
    <scope>ACETYLATION AT SER-2</scope>
    <source>
        <tissue>Gill</tissue>
    </source>
</reference>